<accession>P0C552</accession>
<sequence length="78" mass="8699">MKTLLLTLVVVTIVCLDLGYTLKCHTTQFRNIETCQKWETVCFQRAVKPHPSSMIVLRGCTSSCGKGETCCATDLCNR</sequence>
<protein>
    <recommendedName>
        <fullName>Neurotoxin 3FTx-LK</fullName>
    </recommendedName>
</protein>
<dbReference type="EMBL" id="DQ508407">
    <property type="status" value="NOT_ANNOTATED_CDS"/>
    <property type="molecule type" value="mRNA"/>
</dbReference>
<dbReference type="SMR" id="P0C552"/>
<dbReference type="GO" id="GO:0005576">
    <property type="term" value="C:extracellular region"/>
    <property type="evidence" value="ECO:0007669"/>
    <property type="project" value="UniProtKB-SubCell"/>
</dbReference>
<dbReference type="GO" id="GO:0090729">
    <property type="term" value="F:toxin activity"/>
    <property type="evidence" value="ECO:0007669"/>
    <property type="project" value="UniProtKB-KW"/>
</dbReference>
<dbReference type="CDD" id="cd00206">
    <property type="entry name" value="TFP_snake_toxin"/>
    <property type="match status" value="1"/>
</dbReference>
<dbReference type="Gene3D" id="2.10.60.10">
    <property type="entry name" value="CD59"/>
    <property type="match status" value="1"/>
</dbReference>
<dbReference type="InterPro" id="IPR003571">
    <property type="entry name" value="Snake_3FTx"/>
</dbReference>
<dbReference type="InterPro" id="IPR045860">
    <property type="entry name" value="Snake_toxin-like_sf"/>
</dbReference>
<dbReference type="SUPFAM" id="SSF57302">
    <property type="entry name" value="Snake toxin-like"/>
    <property type="match status" value="1"/>
</dbReference>
<evidence type="ECO:0000250" key="1"/>
<evidence type="ECO:0000250" key="2">
    <source>
        <dbReference type="UniProtKB" id="P60301"/>
    </source>
</evidence>
<evidence type="ECO:0000269" key="3">
    <source>
    </source>
</evidence>
<evidence type="ECO:0000305" key="4"/>
<evidence type="ECO:0000305" key="5">
    <source>
    </source>
</evidence>
<proteinExistence type="evidence at protein level"/>
<comment type="function">
    <text evidence="1">Blocks both the muscle-twitch response to nerve stimulation and the response to exogenous acetylcholine.</text>
</comment>
<comment type="subcellular location">
    <subcellularLocation>
        <location>Secreted</location>
    </subcellularLocation>
</comment>
<comment type="tissue specificity">
    <text>Expressed by the venom gland.</text>
</comment>
<comment type="mass spectrometry" mass="6401.0" error="1.0" method="Electrospray" evidence="3"/>
<comment type="similarity">
    <text evidence="4">Belongs to the three-finger toxin family. Short-chain subfamily. Orphan group XVIII sub-subfamily.</text>
</comment>
<reference key="1">
    <citation type="journal article" date="2007" name="FEBS J.">
        <title>Sequences, geographic variations and molecular phylogeny of venom phospholipases and three-finger toxins of eastern India Bungarus fasciatus and kinetic analyses of its Pro31 phospholipases A2.</title>
        <authorList>
            <person name="Tsai I.-H."/>
            <person name="Tsai H.-Y."/>
            <person name="Saha A."/>
            <person name="Gomes A."/>
        </authorList>
    </citation>
    <scope>NUCLEOTIDE SEQUENCE [MRNA]</scope>
    <scope>PROTEIN SEQUENCE OF 22-34</scope>
    <scope>MASS SPECTROMETRY</scope>
    <source>
        <tissue>Venom</tissue>
        <tissue>Venom gland</tissue>
    </source>
</reference>
<organism>
    <name type="scientific">Bungarus fasciatus</name>
    <name type="common">Banded krait</name>
    <name type="synonym">Pseudoboa fasciata</name>
    <dbReference type="NCBI Taxonomy" id="8613"/>
    <lineage>
        <taxon>Eukaryota</taxon>
        <taxon>Metazoa</taxon>
        <taxon>Chordata</taxon>
        <taxon>Craniata</taxon>
        <taxon>Vertebrata</taxon>
        <taxon>Euteleostomi</taxon>
        <taxon>Lepidosauria</taxon>
        <taxon>Squamata</taxon>
        <taxon>Bifurcata</taxon>
        <taxon>Unidentata</taxon>
        <taxon>Episquamata</taxon>
        <taxon>Toxicofera</taxon>
        <taxon>Serpentes</taxon>
        <taxon>Colubroidea</taxon>
        <taxon>Elapidae</taxon>
        <taxon>Bungarinae</taxon>
        <taxon>Bungarus</taxon>
    </lineage>
</organism>
<feature type="signal peptide" evidence="3">
    <location>
        <begin position="1"/>
        <end position="21"/>
    </location>
</feature>
<feature type="chain" id="PRO_0000293104" description="Neurotoxin 3FTx-LK" evidence="5">
    <location>
        <begin position="22"/>
        <end position="78"/>
    </location>
</feature>
<feature type="disulfide bond" evidence="2">
    <location>
        <begin position="24"/>
        <end position="42"/>
    </location>
</feature>
<feature type="disulfide bond" evidence="2">
    <location>
        <begin position="35"/>
        <end position="60"/>
    </location>
</feature>
<feature type="disulfide bond" evidence="2">
    <location>
        <begin position="64"/>
        <end position="70"/>
    </location>
</feature>
<feature type="disulfide bond" evidence="2">
    <location>
        <begin position="71"/>
        <end position="76"/>
    </location>
</feature>
<name>3SOIK_BUNFA</name>
<keyword id="KW-0903">Direct protein sequencing</keyword>
<keyword id="KW-1015">Disulfide bond</keyword>
<keyword id="KW-0528">Neurotoxin</keyword>
<keyword id="KW-0629">Postsynaptic neurotoxin</keyword>
<keyword id="KW-0964">Secreted</keyword>
<keyword id="KW-0732">Signal</keyword>
<keyword id="KW-0800">Toxin</keyword>